<dbReference type="EC" id="4.1.99.29" evidence="1 2"/>
<dbReference type="EMBL" id="AB447893">
    <property type="protein sequence ID" value="BAG71679.1"/>
    <property type="molecule type" value="Genomic_DNA"/>
</dbReference>
<dbReference type="EMBL" id="AP008226">
    <property type="protein sequence ID" value="BAD71391.1"/>
    <property type="molecule type" value="Genomic_DNA"/>
</dbReference>
<dbReference type="RefSeq" id="WP_011228771.1">
    <property type="nucleotide sequence ID" value="NC_006461.1"/>
</dbReference>
<dbReference type="RefSeq" id="YP_144834.1">
    <property type="nucleotide sequence ID" value="NC_006461.1"/>
</dbReference>
<dbReference type="PDB" id="2CZL">
    <property type="method" value="X-ray"/>
    <property type="resolution" value="1.55 A"/>
    <property type="chains" value="A=1-272"/>
</dbReference>
<dbReference type="PDB" id="3A3U">
    <property type="method" value="X-ray"/>
    <property type="resolution" value="1.65 A"/>
    <property type="chains" value="A=1-272"/>
</dbReference>
<dbReference type="PDBsum" id="2CZL"/>
<dbReference type="PDBsum" id="3A3U"/>
<dbReference type="SMR" id="Q5SI12"/>
<dbReference type="EnsemblBacteria" id="BAD71391">
    <property type="protein sequence ID" value="BAD71391"/>
    <property type="gene ID" value="BAD71391"/>
</dbReference>
<dbReference type="GeneID" id="3168082"/>
<dbReference type="KEGG" id="ttj:TTHA1568"/>
<dbReference type="PATRIC" id="fig|300852.9.peg.1539"/>
<dbReference type="eggNOG" id="COG2107">
    <property type="taxonomic scope" value="Bacteria"/>
</dbReference>
<dbReference type="HOGENOM" id="CLU_070326_0_0_0"/>
<dbReference type="PhylomeDB" id="Q5SI12"/>
<dbReference type="UniPathway" id="UPA00079"/>
<dbReference type="EvolutionaryTrace" id="Q5SI12"/>
<dbReference type="Proteomes" id="UP000000532">
    <property type="component" value="Chromosome"/>
</dbReference>
<dbReference type="GO" id="GO:0016830">
    <property type="term" value="F:carbon-carbon lyase activity"/>
    <property type="evidence" value="ECO:0007669"/>
    <property type="project" value="UniProtKB-UniRule"/>
</dbReference>
<dbReference type="GO" id="GO:0009234">
    <property type="term" value="P:menaquinone biosynthetic process"/>
    <property type="evidence" value="ECO:0007669"/>
    <property type="project" value="UniProtKB-UniRule"/>
</dbReference>
<dbReference type="CDD" id="cd13635">
    <property type="entry name" value="PBP2_Ttha1568_Mqnd"/>
    <property type="match status" value="1"/>
</dbReference>
<dbReference type="Gene3D" id="3.40.190.10">
    <property type="entry name" value="Periplasmic binding protein-like II"/>
    <property type="match status" value="2"/>
</dbReference>
<dbReference type="HAMAP" id="MF_00996">
    <property type="entry name" value="MqnD"/>
    <property type="match status" value="1"/>
</dbReference>
<dbReference type="InterPro" id="IPR003773">
    <property type="entry name" value="Menaquinone_biosynth"/>
</dbReference>
<dbReference type="InterPro" id="IPR030869">
    <property type="entry name" value="MqnD"/>
</dbReference>
<dbReference type="PANTHER" id="PTHR37167">
    <property type="entry name" value="1,4-DIHYDROXY-6-NAPHTOATE SYNTHASE"/>
    <property type="match status" value="1"/>
</dbReference>
<dbReference type="PANTHER" id="PTHR37167:SF1">
    <property type="entry name" value="1,4-DIHYDROXY-6-NAPHTOATE SYNTHASE"/>
    <property type="match status" value="1"/>
</dbReference>
<dbReference type="Pfam" id="PF02621">
    <property type="entry name" value="VitK2_biosynth"/>
    <property type="match status" value="1"/>
</dbReference>
<dbReference type="SUPFAM" id="SSF53850">
    <property type="entry name" value="Periplasmic binding protein-like II"/>
    <property type="match status" value="1"/>
</dbReference>
<reference key="1">
    <citation type="journal article" date="2008" name="Science">
        <title>An alternative menaquinone biosynthetic pathway operating in microorganisms.</title>
        <authorList>
            <person name="Hiratsuka T."/>
            <person name="Furihata K."/>
            <person name="Ishikawa J."/>
            <person name="Yamashita H."/>
            <person name="Itoh N."/>
            <person name="Seto H."/>
            <person name="Dairi T."/>
        </authorList>
    </citation>
    <scope>NUCLEOTIDE SEQUENCE [GENOMIC DNA]</scope>
    <scope>FUNCTION</scope>
    <scope>CATALYTIC ACTIVITY</scope>
    <scope>PATHWAY</scope>
    <source>
        <strain>ATCC 27634 / DSM 579 / HB8</strain>
    </source>
</reference>
<reference key="2">
    <citation type="submission" date="2004-11" db="EMBL/GenBank/DDBJ databases">
        <title>Complete genome sequence of Thermus thermophilus HB8.</title>
        <authorList>
            <person name="Masui R."/>
            <person name="Kurokawa K."/>
            <person name="Nakagawa N."/>
            <person name="Tokunaga F."/>
            <person name="Koyama Y."/>
            <person name="Shibata T."/>
            <person name="Oshima T."/>
            <person name="Yokoyama S."/>
            <person name="Yasunaga T."/>
            <person name="Kuramitsu S."/>
        </authorList>
    </citation>
    <scope>NUCLEOTIDE SEQUENCE [LARGE SCALE GENOMIC DNA]</scope>
    <source>
        <strain>ATCC 27634 / DSM 579 / HB8</strain>
    </source>
</reference>
<reference key="3">
    <citation type="journal article" date="2009" name="J. Struct. Biol.">
        <title>Crystal structure of MqnD (TTHA1568), a menaquinone biosynthetic enzyme from Thermus thermophilus HB8.</title>
        <authorList>
            <person name="Arai R."/>
            <person name="Murayama K."/>
            <person name="Uchikubo-Kamo T."/>
            <person name="Nishimoto M."/>
            <person name="Toyama M."/>
            <person name="Kuramitsu S."/>
            <person name="Terada T."/>
            <person name="Shirouzu M."/>
            <person name="Yokoyama S."/>
        </authorList>
    </citation>
    <scope>X-RAY CRYSTALLOGRAPHY (1.55 ANGSTROMS) OF APOENZYME AND IN COMPLEX WITH TARTARATE</scope>
    <scope>ACTIVE SITE</scope>
    <scope>REACTION MECHANISM</scope>
    <source>
        <strain>ATCC 27634 / DSM 579 / HB8</strain>
    </source>
</reference>
<proteinExistence type="evidence at protein level"/>
<sequence length="272" mass="30034">MEALRLGFSPCPNDTFIFYALVHGRVESPVPLEPVLEDVETLNRWALEGRLPLTKLSYAAYAQVRDRYVALRSGGALGRGVGPLVVARGPLQALEGLRVAVPGRHTTAYFLLSLYAQGFVPVEVRYDRILPMVAQGEVEAGLIIHESRFTYPRYGLVQVVDLGAWWEERTGLPLPLGAILARRDLGEGLIRALDEAVRRSVAYALAHPEEALDYMRAHAQELSDEVIWAHVHTYVNAFSLDVGEEGERAVARLFAEAEARGLAAPSPRPLFV</sequence>
<organism>
    <name type="scientific">Thermus thermophilus (strain ATCC 27634 / DSM 579 / HB8)</name>
    <dbReference type="NCBI Taxonomy" id="300852"/>
    <lineage>
        <taxon>Bacteria</taxon>
        <taxon>Thermotogati</taxon>
        <taxon>Deinococcota</taxon>
        <taxon>Deinococci</taxon>
        <taxon>Thermales</taxon>
        <taxon>Thermaceae</taxon>
        <taxon>Thermus</taxon>
    </lineage>
</organism>
<name>MQND_THET8</name>
<comment type="function">
    <text evidence="1 2">Catalyzes the conversion of cyclic dehypoxanthine futalosine (cyclic DHFL) into 1,4-dihydroxy-6-naphthoate, a step in the biosynthesis of menaquinone (MK, vitamin K2).</text>
</comment>
<comment type="catalytic activity">
    <reaction evidence="1 2">
        <text>cyclic dehypoxanthinylfutalosinate = 1,4-dihydroxy-6-naphthoate + dihydroxyacetone</text>
        <dbReference type="Rhea" id="RHEA:33087"/>
        <dbReference type="ChEBI" id="CHEBI:16016"/>
        <dbReference type="ChEBI" id="CHEBI:64254"/>
        <dbReference type="ChEBI" id="CHEBI:64270"/>
        <dbReference type="EC" id="4.1.99.29"/>
    </reaction>
</comment>
<comment type="pathway">
    <text evidence="1 2">Quinol/quinone metabolism; menaquinone biosynthesis.</text>
</comment>
<comment type="miscellaneous">
    <text evidence="4">The tartarate seen in the active site in the crystallographic structure may partially mimic the substrate; it is suspected that the tartarate may resemble the open-chain form of the ribose part of the substrate, cyclic dehypoxanthine futalosine.</text>
</comment>
<comment type="similarity">
    <text evidence="1">Belongs to the MqnA/MqnD family. MqnD subfamily.</text>
</comment>
<keyword id="KW-0002">3D-structure</keyword>
<keyword id="KW-0456">Lyase</keyword>
<keyword id="KW-0474">Menaquinone biosynthesis</keyword>
<keyword id="KW-1185">Reference proteome</keyword>
<feature type="chain" id="PRO_0000425126" description="1,4-dihydroxy-6-naphtoate synthase">
    <location>
        <begin position="1"/>
        <end position="272"/>
    </location>
</feature>
<feature type="active site" description="Proton acceptor" evidence="4">
    <location>
        <position position="145"/>
    </location>
</feature>
<feature type="binding site" evidence="3">
    <location>
        <begin position="55"/>
        <end position="57"/>
    </location>
    <ligand>
        <name>substrate</name>
    </ligand>
</feature>
<feature type="binding site" evidence="3">
    <location>
        <begin position="107"/>
        <end position="108"/>
    </location>
    <ligand>
        <name>substrate</name>
    </ligand>
</feature>
<feature type="strand" evidence="5">
    <location>
        <begin position="4"/>
        <end position="8"/>
    </location>
</feature>
<feature type="helix" evidence="5">
    <location>
        <begin position="12"/>
        <end position="22"/>
    </location>
</feature>
<feature type="strand" evidence="5">
    <location>
        <begin position="32"/>
        <end position="36"/>
    </location>
</feature>
<feature type="helix" evidence="5">
    <location>
        <begin position="39"/>
        <end position="47"/>
    </location>
</feature>
<feature type="strand" evidence="5">
    <location>
        <begin position="52"/>
        <end position="57"/>
    </location>
</feature>
<feature type="helix" evidence="5">
    <location>
        <begin position="58"/>
        <end position="61"/>
    </location>
</feature>
<feature type="turn" evidence="5">
    <location>
        <begin position="65"/>
        <end position="67"/>
    </location>
</feature>
<feature type="strand" evidence="5">
    <location>
        <begin position="68"/>
        <end position="70"/>
    </location>
</feature>
<feature type="strand" evidence="5">
    <location>
        <begin position="72"/>
        <end position="74"/>
    </location>
</feature>
<feature type="strand" evidence="5">
    <location>
        <begin position="76"/>
        <end position="80"/>
    </location>
</feature>
<feature type="strand" evidence="5">
    <location>
        <begin position="84"/>
        <end position="89"/>
    </location>
</feature>
<feature type="strand" evidence="5">
    <location>
        <begin position="98"/>
        <end position="102"/>
    </location>
</feature>
<feature type="helix" evidence="5">
    <location>
        <begin position="107"/>
        <end position="115"/>
    </location>
</feature>
<feature type="strand" evidence="5">
    <location>
        <begin position="120"/>
        <end position="123"/>
    </location>
</feature>
<feature type="helix" evidence="5">
    <location>
        <begin position="126"/>
        <end position="128"/>
    </location>
</feature>
<feature type="helix" evidence="5">
    <location>
        <begin position="129"/>
        <end position="134"/>
    </location>
</feature>
<feature type="strand" evidence="5">
    <location>
        <begin position="137"/>
        <end position="143"/>
    </location>
</feature>
<feature type="helix" evidence="5">
    <location>
        <begin position="147"/>
        <end position="150"/>
    </location>
</feature>
<feature type="helix" evidence="5">
    <location>
        <begin position="151"/>
        <end position="154"/>
    </location>
</feature>
<feature type="strand" evidence="5">
    <location>
        <begin position="157"/>
        <end position="161"/>
    </location>
</feature>
<feature type="helix" evidence="5">
    <location>
        <begin position="162"/>
        <end position="170"/>
    </location>
</feature>
<feature type="strand" evidence="5">
    <location>
        <begin position="174"/>
        <end position="182"/>
    </location>
</feature>
<feature type="helix" evidence="5">
    <location>
        <begin position="183"/>
        <end position="185"/>
    </location>
</feature>
<feature type="helix" evidence="5">
    <location>
        <begin position="187"/>
        <end position="206"/>
    </location>
</feature>
<feature type="helix" evidence="5">
    <location>
        <begin position="208"/>
        <end position="211"/>
    </location>
</feature>
<feature type="helix" evidence="5">
    <location>
        <begin position="212"/>
        <end position="218"/>
    </location>
</feature>
<feature type="helix" evidence="5">
    <location>
        <begin position="224"/>
        <end position="234"/>
    </location>
</feature>
<feature type="helix" evidence="5">
    <location>
        <begin position="237"/>
        <end position="240"/>
    </location>
</feature>
<feature type="helix" evidence="5">
    <location>
        <begin position="243"/>
        <end position="259"/>
    </location>
</feature>
<accession>Q5SI12</accession>
<evidence type="ECO:0000255" key="1">
    <source>
        <dbReference type="HAMAP-Rule" id="MF_00996"/>
    </source>
</evidence>
<evidence type="ECO:0000269" key="2">
    <source>
    </source>
</evidence>
<evidence type="ECO:0000305" key="3"/>
<evidence type="ECO:0000305" key="4">
    <source>
    </source>
</evidence>
<evidence type="ECO:0007829" key="5">
    <source>
        <dbReference type="PDB" id="2CZL"/>
    </source>
</evidence>
<gene>
    <name evidence="1" type="primary">mqnD</name>
    <name type="ordered locus">TTHA1568</name>
</gene>
<protein>
    <recommendedName>
        <fullName evidence="1">1,4-dihydroxy-6-naphtoate synthase</fullName>
        <ecNumber evidence="1 2">4.1.99.29</ecNumber>
    </recommendedName>
    <alternativeName>
        <fullName evidence="1">Menaquinone biosynthetic enzyme MqnD</fullName>
    </alternativeName>
</protein>